<name>RNB_SALPA</name>
<evidence type="ECO:0000255" key="1"/>
<evidence type="ECO:0000255" key="2">
    <source>
        <dbReference type="HAMAP-Rule" id="MF_01036"/>
    </source>
</evidence>
<accession>Q5PCZ6</accession>
<sequence length="644" mass="72451">MFQDNPLLAQLKQQLHSQTPRAEGVVKATEKGFGFLEVDAQKSYFIPPPQMKKVMHGDRIVAVIHTEKERESAEPEELIEPFLTRFVGKVQGKNDRLSIVPDHPLLKDAIPCRAARGVQHEFKEGDWAVAEMRRHPLKGDRSFYADLTQYITFADDHFVPWWVTLARHNLEKEAPNGVATEMLDEGLERQDLTALNFVTIDSASTEDMDDALYAEELADGRLQLTVAIADPTAWIAEGSKLDNAAKIRAFTNYLPGFNIPMLPRELSDDLCSLRANEVRPALACRMIIAADGTIDDDIAFFAATIESKAKLVYDNVSDWLENNGTWQPENEGIAQQIRLLHRICLSRSEWRHHHALVFKDRPDYRFVLGEKGEVLDIVAEPRRIANRIVEESMIAANLCAARVLRDKLGFGIYNVHTGFDPANADALAALLKTHGLHVDAEEVLTLEGFCKLRRELDAQPSGFLDSRIRRFQSFAEISTEPGPHFGLGLEAYATWTSPIRKYGDMINHRLLKAVIKGEAIARPQEDITQQMAERRRLNRMAERDVGDWLYARFLNDKAGTNTRFAAEIIDVSRGGMRVRLVDNGAIAFIPAPFLHAVRDELVCSQENGTVQIKGETVYKVTDVIDVTIAEVRMETRSIIARPAA</sequence>
<feature type="chain" id="PRO_1000063896" description="Exoribonuclease 2">
    <location>
        <begin position="1"/>
        <end position="644"/>
    </location>
</feature>
<feature type="domain" description="RNB" evidence="1">
    <location>
        <begin position="189"/>
        <end position="516"/>
    </location>
</feature>
<feature type="domain" description="S1 motif" evidence="2">
    <location>
        <begin position="561"/>
        <end position="643"/>
    </location>
</feature>
<protein>
    <recommendedName>
        <fullName evidence="2">Exoribonuclease 2</fullName>
        <ecNumber evidence="2">3.1.13.1</ecNumber>
    </recommendedName>
    <alternativeName>
        <fullName evidence="2">Exoribonuclease II</fullName>
        <shortName evidence="2">RNase II</shortName>
        <shortName evidence="2">Ribonuclease II</shortName>
    </alternativeName>
</protein>
<keyword id="KW-0963">Cytoplasm</keyword>
<keyword id="KW-0269">Exonuclease</keyword>
<keyword id="KW-0378">Hydrolase</keyword>
<keyword id="KW-0540">Nuclease</keyword>
<keyword id="KW-0694">RNA-binding</keyword>
<proteinExistence type="inferred from homology"/>
<dbReference type="EC" id="3.1.13.1" evidence="2"/>
<dbReference type="EMBL" id="CP000026">
    <property type="protein sequence ID" value="AAV77136.1"/>
    <property type="molecule type" value="Genomic_DNA"/>
</dbReference>
<dbReference type="RefSeq" id="WP_000485045.1">
    <property type="nucleotide sequence ID" value="NC_006511.1"/>
</dbReference>
<dbReference type="SMR" id="Q5PCZ6"/>
<dbReference type="KEGG" id="spt:SPA1175"/>
<dbReference type="HOGENOM" id="CLU_002333_7_3_6"/>
<dbReference type="Proteomes" id="UP000008185">
    <property type="component" value="Chromosome"/>
</dbReference>
<dbReference type="GO" id="GO:0005829">
    <property type="term" value="C:cytosol"/>
    <property type="evidence" value="ECO:0007669"/>
    <property type="project" value="UniProtKB-ARBA"/>
</dbReference>
<dbReference type="GO" id="GO:0008859">
    <property type="term" value="F:exoribonuclease II activity"/>
    <property type="evidence" value="ECO:0007669"/>
    <property type="project" value="UniProtKB-UniRule"/>
</dbReference>
<dbReference type="GO" id="GO:0003723">
    <property type="term" value="F:RNA binding"/>
    <property type="evidence" value="ECO:0007669"/>
    <property type="project" value="UniProtKB-KW"/>
</dbReference>
<dbReference type="GO" id="GO:0006402">
    <property type="term" value="P:mRNA catabolic process"/>
    <property type="evidence" value="ECO:0007669"/>
    <property type="project" value="UniProtKB-UniRule"/>
</dbReference>
<dbReference type="FunFam" id="2.40.50.140:FF:000079">
    <property type="entry name" value="Exoribonuclease 2"/>
    <property type="match status" value="1"/>
</dbReference>
<dbReference type="FunFam" id="2.40.50.140:FF:000081">
    <property type="entry name" value="Exoribonuclease 2"/>
    <property type="match status" value="1"/>
</dbReference>
<dbReference type="FunFam" id="2.40.50.640:FF:000001">
    <property type="entry name" value="Exoribonuclease 2"/>
    <property type="match status" value="1"/>
</dbReference>
<dbReference type="Gene3D" id="2.40.50.640">
    <property type="match status" value="1"/>
</dbReference>
<dbReference type="Gene3D" id="2.40.50.140">
    <property type="entry name" value="Nucleic acid-binding proteins"/>
    <property type="match status" value="2"/>
</dbReference>
<dbReference type="HAMAP" id="MF_01036">
    <property type="entry name" value="RNase_II"/>
    <property type="match status" value="1"/>
</dbReference>
<dbReference type="InterPro" id="IPR011129">
    <property type="entry name" value="CSD"/>
</dbReference>
<dbReference type="InterPro" id="IPR012340">
    <property type="entry name" value="NA-bd_OB-fold"/>
</dbReference>
<dbReference type="InterPro" id="IPR013223">
    <property type="entry name" value="RNase_B_OB_dom"/>
</dbReference>
<dbReference type="InterPro" id="IPR011804">
    <property type="entry name" value="RNase_II"/>
</dbReference>
<dbReference type="InterPro" id="IPR001900">
    <property type="entry name" value="RNase_II/R"/>
</dbReference>
<dbReference type="InterPro" id="IPR022966">
    <property type="entry name" value="RNase_II/R_CS"/>
</dbReference>
<dbReference type="InterPro" id="IPR004476">
    <property type="entry name" value="RNase_II/RNase_R"/>
</dbReference>
<dbReference type="InterPro" id="IPR050180">
    <property type="entry name" value="RNR_Ribonuclease"/>
</dbReference>
<dbReference type="InterPro" id="IPR003029">
    <property type="entry name" value="S1_domain"/>
</dbReference>
<dbReference type="NCBIfam" id="TIGR00358">
    <property type="entry name" value="3_prime_RNase"/>
    <property type="match status" value="1"/>
</dbReference>
<dbReference type="NCBIfam" id="NF003455">
    <property type="entry name" value="PRK05054.1"/>
    <property type="match status" value="1"/>
</dbReference>
<dbReference type="NCBIfam" id="TIGR02062">
    <property type="entry name" value="RNase_B"/>
    <property type="match status" value="1"/>
</dbReference>
<dbReference type="PANTHER" id="PTHR23355:SF37">
    <property type="entry name" value="EXORIBONUCLEASE 2"/>
    <property type="match status" value="1"/>
</dbReference>
<dbReference type="PANTHER" id="PTHR23355">
    <property type="entry name" value="RIBONUCLEASE"/>
    <property type="match status" value="1"/>
</dbReference>
<dbReference type="Pfam" id="PF08206">
    <property type="entry name" value="OB_RNB"/>
    <property type="match status" value="1"/>
</dbReference>
<dbReference type="Pfam" id="PF00773">
    <property type="entry name" value="RNB"/>
    <property type="match status" value="1"/>
</dbReference>
<dbReference type="Pfam" id="PF00575">
    <property type="entry name" value="S1"/>
    <property type="match status" value="1"/>
</dbReference>
<dbReference type="SMART" id="SM00357">
    <property type="entry name" value="CSP"/>
    <property type="match status" value="1"/>
</dbReference>
<dbReference type="SMART" id="SM00955">
    <property type="entry name" value="RNB"/>
    <property type="match status" value="1"/>
</dbReference>
<dbReference type="SUPFAM" id="SSF50249">
    <property type="entry name" value="Nucleic acid-binding proteins"/>
    <property type="match status" value="4"/>
</dbReference>
<dbReference type="PROSITE" id="PS01175">
    <property type="entry name" value="RIBONUCLEASE_II"/>
    <property type="match status" value="1"/>
</dbReference>
<organism>
    <name type="scientific">Salmonella paratyphi A (strain ATCC 9150 / SARB42)</name>
    <dbReference type="NCBI Taxonomy" id="295319"/>
    <lineage>
        <taxon>Bacteria</taxon>
        <taxon>Pseudomonadati</taxon>
        <taxon>Pseudomonadota</taxon>
        <taxon>Gammaproteobacteria</taxon>
        <taxon>Enterobacterales</taxon>
        <taxon>Enterobacteriaceae</taxon>
        <taxon>Salmonella</taxon>
    </lineage>
</organism>
<comment type="function">
    <text evidence="2">Involved in mRNA degradation. Hydrolyzes single-stranded polyribonucleotides processively in the 3' to 5' direction.</text>
</comment>
<comment type="catalytic activity">
    <reaction evidence="2">
        <text>Exonucleolytic cleavage in the 3'- to 5'-direction to yield nucleoside 5'-phosphates.</text>
        <dbReference type="EC" id="3.1.13.1"/>
    </reaction>
</comment>
<comment type="subcellular location">
    <subcellularLocation>
        <location evidence="2">Cytoplasm</location>
    </subcellularLocation>
</comment>
<comment type="similarity">
    <text evidence="2">Belongs to the RNR ribonuclease family. RNase II subfamily.</text>
</comment>
<reference key="1">
    <citation type="journal article" date="2004" name="Nat. Genet.">
        <title>Comparison of genome degradation in Paratyphi A and Typhi, human-restricted serovars of Salmonella enterica that cause typhoid.</title>
        <authorList>
            <person name="McClelland M."/>
            <person name="Sanderson K.E."/>
            <person name="Clifton S.W."/>
            <person name="Latreille P."/>
            <person name="Porwollik S."/>
            <person name="Sabo A."/>
            <person name="Meyer R."/>
            <person name="Bieri T."/>
            <person name="Ozersky P."/>
            <person name="McLellan M."/>
            <person name="Harkins C.R."/>
            <person name="Wang C."/>
            <person name="Nguyen C."/>
            <person name="Berghoff A."/>
            <person name="Elliott G."/>
            <person name="Kohlberg S."/>
            <person name="Strong C."/>
            <person name="Du F."/>
            <person name="Carter J."/>
            <person name="Kremizki C."/>
            <person name="Layman D."/>
            <person name="Leonard S."/>
            <person name="Sun H."/>
            <person name="Fulton L."/>
            <person name="Nash W."/>
            <person name="Miner T."/>
            <person name="Minx P."/>
            <person name="Delehaunty K."/>
            <person name="Fronick C."/>
            <person name="Magrini V."/>
            <person name="Nhan M."/>
            <person name="Warren W."/>
            <person name="Florea L."/>
            <person name="Spieth J."/>
            <person name="Wilson R.K."/>
        </authorList>
    </citation>
    <scope>NUCLEOTIDE SEQUENCE [LARGE SCALE GENOMIC DNA]</scope>
    <source>
        <strain>ATCC 9150 / SARB42</strain>
    </source>
</reference>
<gene>
    <name evidence="2" type="primary">rnb</name>
    <name type="ordered locus">SPA1175</name>
</gene>